<proteinExistence type="inferred from homology"/>
<comment type="function">
    <text evidence="1">Catalyzes the hydrolytic deamination of adenine to hypoxanthine. Plays an important role in the purine salvage pathway and in nitrogen catabolism.</text>
</comment>
<comment type="catalytic activity">
    <reaction evidence="1">
        <text>adenine + H2O + H(+) = hypoxanthine + NH4(+)</text>
        <dbReference type="Rhea" id="RHEA:23688"/>
        <dbReference type="ChEBI" id="CHEBI:15377"/>
        <dbReference type="ChEBI" id="CHEBI:15378"/>
        <dbReference type="ChEBI" id="CHEBI:16708"/>
        <dbReference type="ChEBI" id="CHEBI:17368"/>
        <dbReference type="ChEBI" id="CHEBI:28938"/>
        <dbReference type="EC" id="3.5.4.2"/>
    </reaction>
</comment>
<comment type="cofactor">
    <cofactor evidence="1">
        <name>Zn(2+)</name>
        <dbReference type="ChEBI" id="CHEBI:29105"/>
    </cofactor>
    <text evidence="1">Binds 1 zinc ion per subunit.</text>
</comment>
<comment type="similarity">
    <text evidence="1">Belongs to the metallo-dependent hydrolases superfamily. Adenosine and AMP deaminases family. Adenine deaminase type 2 subfamily.</text>
</comment>
<protein>
    <recommendedName>
        <fullName evidence="1">Adenine deaminase</fullName>
        <shortName evidence="1">ADE</shortName>
        <ecNumber evidence="1">3.5.4.2</ecNumber>
    </recommendedName>
    <alternativeName>
        <fullName evidence="1">Adenine aminohydrolase</fullName>
        <shortName evidence="1">AAH</shortName>
    </alternativeName>
</protein>
<evidence type="ECO:0000255" key="1">
    <source>
        <dbReference type="HAMAP-Rule" id="MF_01962"/>
    </source>
</evidence>
<sequence length="341" mass="37282">MPDGFASHEERAAFIAGLPKAELHLHIEGSLEPELLFEFARRNRVAIPFASIDDVRAAYAFTNLQDFLDIYYQGMGVLHTEQDFFDLTAAYCARANADSVRHIEIFFDPQGHTARGVAFETVITGITRALDDAEARYGITSKLILCFLRHLSEAEAEATLDEALPFLGRIAGVGLDSSEVGHPPAKFERVFARARSLGLKTVAHAGEEGPPEYVREALDLLKVDRIDHGNRSLEDPALVARLAASDMTLTVCPLSNLKLCVVDDIADHPLKIMLDADLKATVNSDDPSYFGGYVNANYQAVADALDLSRDDLVTLARNSFTGSFLSDAEKARHLAAIDAYA</sequence>
<name>ADE_SPHAL</name>
<dbReference type="EC" id="3.5.4.2" evidence="1"/>
<dbReference type="EMBL" id="CP000356">
    <property type="protein sequence ID" value="ABF53720.1"/>
    <property type="molecule type" value="Genomic_DNA"/>
</dbReference>
<dbReference type="RefSeq" id="WP_011542296.1">
    <property type="nucleotide sequence ID" value="NC_008048.1"/>
</dbReference>
<dbReference type="SMR" id="Q1GRK2"/>
<dbReference type="STRING" id="317655.Sala_2009"/>
<dbReference type="KEGG" id="sal:Sala_2009"/>
<dbReference type="eggNOG" id="COG1816">
    <property type="taxonomic scope" value="Bacteria"/>
</dbReference>
<dbReference type="HOGENOM" id="CLU_039228_7_0_5"/>
<dbReference type="OrthoDB" id="105475at2"/>
<dbReference type="Proteomes" id="UP000006578">
    <property type="component" value="Chromosome"/>
</dbReference>
<dbReference type="GO" id="GO:0005829">
    <property type="term" value="C:cytosol"/>
    <property type="evidence" value="ECO:0007669"/>
    <property type="project" value="TreeGrafter"/>
</dbReference>
<dbReference type="GO" id="GO:0000034">
    <property type="term" value="F:adenine deaminase activity"/>
    <property type="evidence" value="ECO:0007669"/>
    <property type="project" value="UniProtKB-UniRule"/>
</dbReference>
<dbReference type="GO" id="GO:0008270">
    <property type="term" value="F:zinc ion binding"/>
    <property type="evidence" value="ECO:0007669"/>
    <property type="project" value="UniProtKB-UniRule"/>
</dbReference>
<dbReference type="GO" id="GO:0006146">
    <property type="term" value="P:adenine catabolic process"/>
    <property type="evidence" value="ECO:0007669"/>
    <property type="project" value="UniProtKB-UniRule"/>
</dbReference>
<dbReference type="GO" id="GO:0043103">
    <property type="term" value="P:hypoxanthine salvage"/>
    <property type="evidence" value="ECO:0007669"/>
    <property type="project" value="UniProtKB-UniRule"/>
</dbReference>
<dbReference type="GO" id="GO:0009117">
    <property type="term" value="P:nucleotide metabolic process"/>
    <property type="evidence" value="ECO:0007669"/>
    <property type="project" value="UniProtKB-KW"/>
</dbReference>
<dbReference type="CDD" id="cd01320">
    <property type="entry name" value="ADA"/>
    <property type="match status" value="1"/>
</dbReference>
<dbReference type="FunFam" id="3.20.20.140:FF:000039">
    <property type="entry name" value="Adenine deaminase"/>
    <property type="match status" value="1"/>
</dbReference>
<dbReference type="Gene3D" id="3.20.20.140">
    <property type="entry name" value="Metal-dependent hydrolases"/>
    <property type="match status" value="1"/>
</dbReference>
<dbReference type="HAMAP" id="MF_01962">
    <property type="entry name" value="Adenine_deaminase"/>
    <property type="match status" value="1"/>
</dbReference>
<dbReference type="InterPro" id="IPR001365">
    <property type="entry name" value="A_deaminase_dom"/>
</dbReference>
<dbReference type="InterPro" id="IPR028892">
    <property type="entry name" value="ADE"/>
</dbReference>
<dbReference type="InterPro" id="IPR006330">
    <property type="entry name" value="Ado/ade_deaminase"/>
</dbReference>
<dbReference type="InterPro" id="IPR032466">
    <property type="entry name" value="Metal_Hydrolase"/>
</dbReference>
<dbReference type="NCBIfam" id="TIGR01430">
    <property type="entry name" value="aden_deam"/>
    <property type="match status" value="1"/>
</dbReference>
<dbReference type="NCBIfam" id="NF006850">
    <property type="entry name" value="PRK09358.1-6"/>
    <property type="match status" value="1"/>
</dbReference>
<dbReference type="PANTHER" id="PTHR43114">
    <property type="entry name" value="ADENINE DEAMINASE"/>
    <property type="match status" value="1"/>
</dbReference>
<dbReference type="PANTHER" id="PTHR43114:SF6">
    <property type="entry name" value="ADENINE DEAMINASE"/>
    <property type="match status" value="1"/>
</dbReference>
<dbReference type="Pfam" id="PF00962">
    <property type="entry name" value="A_deaminase"/>
    <property type="match status" value="1"/>
</dbReference>
<dbReference type="SUPFAM" id="SSF51556">
    <property type="entry name" value="Metallo-dependent hydrolases"/>
    <property type="match status" value="1"/>
</dbReference>
<feature type="chain" id="PRO_1000017709" description="Adenine deaminase">
    <location>
        <begin position="1"/>
        <end position="341"/>
    </location>
</feature>
<feature type="active site" description="Proton donor" evidence="1">
    <location>
        <position position="207"/>
    </location>
</feature>
<feature type="binding site" evidence="1">
    <location>
        <position position="24"/>
    </location>
    <ligand>
        <name>Zn(2+)</name>
        <dbReference type="ChEBI" id="CHEBI:29105"/>
        <note>catalytic</note>
    </ligand>
</feature>
<feature type="binding site" evidence="1">
    <location>
        <position position="26"/>
    </location>
    <ligand>
        <name>Zn(2+)</name>
        <dbReference type="ChEBI" id="CHEBI:29105"/>
        <note>catalytic</note>
    </ligand>
</feature>
<feature type="binding site" evidence="1">
    <location>
        <position position="204"/>
    </location>
    <ligand>
        <name>Zn(2+)</name>
        <dbReference type="ChEBI" id="CHEBI:29105"/>
        <note>catalytic</note>
    </ligand>
</feature>
<feature type="binding site" evidence="1">
    <location>
        <position position="285"/>
    </location>
    <ligand>
        <name>Zn(2+)</name>
        <dbReference type="ChEBI" id="CHEBI:29105"/>
        <note>catalytic</note>
    </ligand>
</feature>
<feature type="binding site" evidence="1">
    <location>
        <position position="286"/>
    </location>
    <ligand>
        <name>substrate</name>
    </ligand>
</feature>
<feature type="site" description="Important for catalytic activity" evidence="1">
    <location>
        <position position="228"/>
    </location>
</feature>
<accession>Q1GRK2</accession>
<keyword id="KW-0378">Hydrolase</keyword>
<keyword id="KW-0479">Metal-binding</keyword>
<keyword id="KW-0546">Nucleotide metabolism</keyword>
<keyword id="KW-1185">Reference proteome</keyword>
<keyword id="KW-0862">Zinc</keyword>
<organism>
    <name type="scientific">Sphingopyxis alaskensis (strain DSM 13593 / LMG 18877 / RB2256)</name>
    <name type="common">Sphingomonas alaskensis</name>
    <dbReference type="NCBI Taxonomy" id="317655"/>
    <lineage>
        <taxon>Bacteria</taxon>
        <taxon>Pseudomonadati</taxon>
        <taxon>Pseudomonadota</taxon>
        <taxon>Alphaproteobacteria</taxon>
        <taxon>Sphingomonadales</taxon>
        <taxon>Sphingomonadaceae</taxon>
        <taxon>Sphingopyxis</taxon>
    </lineage>
</organism>
<reference key="1">
    <citation type="journal article" date="2009" name="Proc. Natl. Acad. Sci. U.S.A.">
        <title>The genomic basis of trophic strategy in marine bacteria.</title>
        <authorList>
            <person name="Lauro F.M."/>
            <person name="McDougald D."/>
            <person name="Thomas T."/>
            <person name="Williams T.J."/>
            <person name="Egan S."/>
            <person name="Rice S."/>
            <person name="DeMaere M.Z."/>
            <person name="Ting L."/>
            <person name="Ertan H."/>
            <person name="Johnson J."/>
            <person name="Ferriera S."/>
            <person name="Lapidus A."/>
            <person name="Anderson I."/>
            <person name="Kyrpides N."/>
            <person name="Munk A.C."/>
            <person name="Detter C."/>
            <person name="Han C.S."/>
            <person name="Brown M.V."/>
            <person name="Robb F.T."/>
            <person name="Kjelleberg S."/>
            <person name="Cavicchioli R."/>
        </authorList>
    </citation>
    <scope>NUCLEOTIDE SEQUENCE [LARGE SCALE GENOMIC DNA]</scope>
    <source>
        <strain>DSM 13593 / LMG 18877 / RB2256</strain>
    </source>
</reference>
<gene>
    <name type="ordered locus">Sala_2009</name>
</gene>